<reference key="1">
    <citation type="journal article" date="1992" name="J. Biol. Chem.">
        <title>Molecular cloning of the gene encoding Thiobacillus ferrooxidans Fe(II) oxidase. High homology of the gene product with HiPIP.</title>
        <authorList>
            <person name="Kusano T."/>
            <person name="Takeshima T."/>
            <person name="Sugawara K."/>
            <person name="Inoue C."/>
            <person name="Shiratori T."/>
            <person name="Yano T."/>
            <person name="Fukumori Y."/>
            <person name="Yamanaka T."/>
        </authorList>
    </citation>
    <scope>NUCLEOTIDE SEQUENCE [GENOMIC DNA]</scope>
    <source>
        <strain>Fe1</strain>
    </source>
</reference>
<accession>P52151</accession>
<gene>
    <name evidence="1" type="primary">purA</name>
</gene>
<organism>
    <name type="scientific">Acidithiobacillus ferrooxidans</name>
    <name type="common">Thiobacillus ferrooxidans</name>
    <dbReference type="NCBI Taxonomy" id="920"/>
    <lineage>
        <taxon>Bacteria</taxon>
        <taxon>Pseudomonadati</taxon>
        <taxon>Pseudomonadota</taxon>
        <taxon>Acidithiobacillia</taxon>
        <taxon>Acidithiobacillales</taxon>
        <taxon>Acidithiobacillaceae</taxon>
        <taxon>Acidithiobacillus</taxon>
    </lineage>
</organism>
<evidence type="ECO:0000255" key="1">
    <source>
        <dbReference type="HAMAP-Rule" id="MF_00011"/>
    </source>
</evidence>
<dbReference type="EC" id="6.3.4.4" evidence="1"/>
<dbReference type="EMBL" id="X57324">
    <property type="protein sequence ID" value="CAA40593.1"/>
    <property type="molecule type" value="Genomic_DNA"/>
</dbReference>
<dbReference type="PIR" id="S23258">
    <property type="entry name" value="S23258"/>
</dbReference>
<dbReference type="SMR" id="P52151"/>
<dbReference type="UniPathway" id="UPA00075">
    <property type="reaction ID" value="UER00335"/>
</dbReference>
<dbReference type="GO" id="GO:0005737">
    <property type="term" value="C:cytoplasm"/>
    <property type="evidence" value="ECO:0007669"/>
    <property type="project" value="UniProtKB-SubCell"/>
</dbReference>
<dbReference type="GO" id="GO:0004019">
    <property type="term" value="F:adenylosuccinate synthase activity"/>
    <property type="evidence" value="ECO:0007669"/>
    <property type="project" value="UniProtKB-UniRule"/>
</dbReference>
<dbReference type="GO" id="GO:0005525">
    <property type="term" value="F:GTP binding"/>
    <property type="evidence" value="ECO:0007669"/>
    <property type="project" value="UniProtKB-UniRule"/>
</dbReference>
<dbReference type="GO" id="GO:0000287">
    <property type="term" value="F:magnesium ion binding"/>
    <property type="evidence" value="ECO:0007669"/>
    <property type="project" value="UniProtKB-UniRule"/>
</dbReference>
<dbReference type="GO" id="GO:0044208">
    <property type="term" value="P:'de novo' AMP biosynthetic process"/>
    <property type="evidence" value="ECO:0007669"/>
    <property type="project" value="UniProtKB-UniRule"/>
</dbReference>
<dbReference type="GO" id="GO:0046040">
    <property type="term" value="P:IMP metabolic process"/>
    <property type="evidence" value="ECO:0007669"/>
    <property type="project" value="TreeGrafter"/>
</dbReference>
<dbReference type="CDD" id="cd03108">
    <property type="entry name" value="AdSS"/>
    <property type="match status" value="1"/>
</dbReference>
<dbReference type="FunFam" id="1.10.300.10:FF:000001">
    <property type="entry name" value="Adenylosuccinate synthetase"/>
    <property type="match status" value="1"/>
</dbReference>
<dbReference type="FunFam" id="3.90.170.10:FF:000001">
    <property type="entry name" value="Adenylosuccinate synthetase"/>
    <property type="match status" value="1"/>
</dbReference>
<dbReference type="Gene3D" id="3.40.440.10">
    <property type="entry name" value="Adenylosuccinate Synthetase, subunit A, domain 1"/>
    <property type="match status" value="1"/>
</dbReference>
<dbReference type="Gene3D" id="1.10.300.10">
    <property type="entry name" value="Adenylosuccinate Synthetase, subunit A, domain 2"/>
    <property type="match status" value="1"/>
</dbReference>
<dbReference type="Gene3D" id="3.90.170.10">
    <property type="entry name" value="Adenylosuccinate Synthetase, subunit A, domain 3"/>
    <property type="match status" value="1"/>
</dbReference>
<dbReference type="HAMAP" id="MF_00011">
    <property type="entry name" value="Adenylosucc_synth"/>
    <property type="match status" value="1"/>
</dbReference>
<dbReference type="InterPro" id="IPR018220">
    <property type="entry name" value="Adenylosuccin_syn_GTP-bd"/>
</dbReference>
<dbReference type="InterPro" id="IPR033128">
    <property type="entry name" value="Adenylosuccin_syn_Lys_AS"/>
</dbReference>
<dbReference type="InterPro" id="IPR042109">
    <property type="entry name" value="Adenylosuccinate_synth_dom1"/>
</dbReference>
<dbReference type="InterPro" id="IPR042110">
    <property type="entry name" value="Adenylosuccinate_synth_dom2"/>
</dbReference>
<dbReference type="InterPro" id="IPR042111">
    <property type="entry name" value="Adenylosuccinate_synth_dom3"/>
</dbReference>
<dbReference type="InterPro" id="IPR001114">
    <property type="entry name" value="Adenylosuccinate_synthetase"/>
</dbReference>
<dbReference type="InterPro" id="IPR027417">
    <property type="entry name" value="P-loop_NTPase"/>
</dbReference>
<dbReference type="NCBIfam" id="NF002223">
    <property type="entry name" value="PRK01117.1"/>
    <property type="match status" value="1"/>
</dbReference>
<dbReference type="NCBIfam" id="TIGR00184">
    <property type="entry name" value="purA"/>
    <property type="match status" value="1"/>
</dbReference>
<dbReference type="PANTHER" id="PTHR11846">
    <property type="entry name" value="ADENYLOSUCCINATE SYNTHETASE"/>
    <property type="match status" value="1"/>
</dbReference>
<dbReference type="PANTHER" id="PTHR11846:SF0">
    <property type="entry name" value="ADENYLOSUCCINATE SYNTHETASE"/>
    <property type="match status" value="1"/>
</dbReference>
<dbReference type="Pfam" id="PF00709">
    <property type="entry name" value="Adenylsucc_synt"/>
    <property type="match status" value="1"/>
</dbReference>
<dbReference type="SMART" id="SM00788">
    <property type="entry name" value="Adenylsucc_synt"/>
    <property type="match status" value="1"/>
</dbReference>
<dbReference type="SUPFAM" id="SSF52540">
    <property type="entry name" value="P-loop containing nucleoside triphosphate hydrolases"/>
    <property type="match status" value="1"/>
</dbReference>
<dbReference type="PROSITE" id="PS01266">
    <property type="entry name" value="ADENYLOSUCCIN_SYN_1"/>
    <property type="match status" value="1"/>
</dbReference>
<dbReference type="PROSITE" id="PS00513">
    <property type="entry name" value="ADENYLOSUCCIN_SYN_2"/>
    <property type="match status" value="1"/>
</dbReference>
<keyword id="KW-0963">Cytoplasm</keyword>
<keyword id="KW-0342">GTP-binding</keyword>
<keyword id="KW-0436">Ligase</keyword>
<keyword id="KW-0460">Magnesium</keyword>
<keyword id="KW-0479">Metal-binding</keyword>
<keyword id="KW-0547">Nucleotide-binding</keyword>
<keyword id="KW-0658">Purine biosynthesis</keyword>
<comment type="function">
    <text evidence="1">Plays an important role in the de novo pathway of purine nucleotide biosynthesis. Catalyzes the first committed step in the biosynthesis of AMP from IMP.</text>
</comment>
<comment type="catalytic activity">
    <reaction evidence="1">
        <text>IMP + L-aspartate + GTP = N(6)-(1,2-dicarboxyethyl)-AMP + GDP + phosphate + 2 H(+)</text>
        <dbReference type="Rhea" id="RHEA:15753"/>
        <dbReference type="ChEBI" id="CHEBI:15378"/>
        <dbReference type="ChEBI" id="CHEBI:29991"/>
        <dbReference type="ChEBI" id="CHEBI:37565"/>
        <dbReference type="ChEBI" id="CHEBI:43474"/>
        <dbReference type="ChEBI" id="CHEBI:57567"/>
        <dbReference type="ChEBI" id="CHEBI:58053"/>
        <dbReference type="ChEBI" id="CHEBI:58189"/>
        <dbReference type="EC" id="6.3.4.4"/>
    </reaction>
</comment>
<comment type="cofactor">
    <cofactor evidence="1">
        <name>Mg(2+)</name>
        <dbReference type="ChEBI" id="CHEBI:18420"/>
    </cofactor>
    <text evidence="1">Binds 1 Mg(2+) ion per subunit.</text>
</comment>
<comment type="pathway">
    <text evidence="1">Purine metabolism; AMP biosynthesis via de novo pathway; AMP from IMP: step 1/2.</text>
</comment>
<comment type="subunit">
    <text evidence="1">Homodimer.</text>
</comment>
<comment type="subcellular location">
    <subcellularLocation>
        <location evidence="1">Cytoplasm</location>
    </subcellularLocation>
</comment>
<comment type="similarity">
    <text evidence="1">Belongs to the adenylosuccinate synthetase family.</text>
</comment>
<protein>
    <recommendedName>
        <fullName evidence="1">Adenylosuccinate synthetase</fullName>
        <shortName evidence="1">AMPSase</shortName>
        <shortName evidence="1">AdSS</shortName>
        <ecNumber evidence="1">6.3.4.4</ecNumber>
    </recommendedName>
    <alternativeName>
        <fullName evidence="1">IMP--aspartate ligase</fullName>
    </alternativeName>
</protein>
<name>PURA_ACIFR</name>
<feature type="chain" id="PRO_0000095250" description="Adenylosuccinate synthetase">
    <location>
        <begin position="1"/>
        <end position="429"/>
    </location>
</feature>
<feature type="active site" description="Proton acceptor" evidence="1">
    <location>
        <position position="14"/>
    </location>
</feature>
<feature type="active site" description="Proton donor" evidence="1">
    <location>
        <position position="42"/>
    </location>
</feature>
<feature type="binding site" evidence="1">
    <location>
        <begin position="13"/>
        <end position="19"/>
    </location>
    <ligand>
        <name>GTP</name>
        <dbReference type="ChEBI" id="CHEBI:37565"/>
    </ligand>
</feature>
<feature type="binding site" description="in other chain" evidence="1">
    <location>
        <begin position="14"/>
        <end position="17"/>
    </location>
    <ligand>
        <name>IMP</name>
        <dbReference type="ChEBI" id="CHEBI:58053"/>
        <note>ligand shared between dimeric partners</note>
    </ligand>
</feature>
<feature type="binding site" evidence="1">
    <location>
        <position position="14"/>
    </location>
    <ligand>
        <name>Mg(2+)</name>
        <dbReference type="ChEBI" id="CHEBI:18420"/>
    </ligand>
</feature>
<feature type="binding site" description="in other chain" evidence="1">
    <location>
        <begin position="39"/>
        <end position="42"/>
    </location>
    <ligand>
        <name>IMP</name>
        <dbReference type="ChEBI" id="CHEBI:58053"/>
        <note>ligand shared between dimeric partners</note>
    </ligand>
</feature>
<feature type="binding site" evidence="1">
    <location>
        <begin position="41"/>
        <end position="43"/>
    </location>
    <ligand>
        <name>GTP</name>
        <dbReference type="ChEBI" id="CHEBI:37565"/>
    </ligand>
</feature>
<feature type="binding site" evidence="1">
    <location>
        <position position="41"/>
    </location>
    <ligand>
        <name>Mg(2+)</name>
        <dbReference type="ChEBI" id="CHEBI:18420"/>
    </ligand>
</feature>
<feature type="binding site" description="in other chain" evidence="1">
    <location>
        <position position="130"/>
    </location>
    <ligand>
        <name>IMP</name>
        <dbReference type="ChEBI" id="CHEBI:58053"/>
        <note>ligand shared between dimeric partners</note>
    </ligand>
</feature>
<feature type="binding site" evidence="1">
    <location>
        <position position="144"/>
    </location>
    <ligand>
        <name>IMP</name>
        <dbReference type="ChEBI" id="CHEBI:58053"/>
        <note>ligand shared between dimeric partners</note>
    </ligand>
</feature>
<feature type="binding site" description="in other chain" evidence="1">
    <location>
        <position position="225"/>
    </location>
    <ligand>
        <name>IMP</name>
        <dbReference type="ChEBI" id="CHEBI:58053"/>
        <note>ligand shared between dimeric partners</note>
    </ligand>
</feature>
<feature type="binding site" description="in other chain" evidence="1">
    <location>
        <position position="240"/>
    </location>
    <ligand>
        <name>IMP</name>
        <dbReference type="ChEBI" id="CHEBI:58053"/>
        <note>ligand shared between dimeric partners</note>
    </ligand>
</feature>
<feature type="binding site" evidence="1">
    <location>
        <begin position="300"/>
        <end position="306"/>
    </location>
    <ligand>
        <name>substrate</name>
    </ligand>
</feature>
<feature type="binding site" description="in other chain" evidence="1">
    <location>
        <position position="304"/>
    </location>
    <ligand>
        <name>IMP</name>
        <dbReference type="ChEBI" id="CHEBI:58053"/>
        <note>ligand shared between dimeric partners</note>
    </ligand>
</feature>
<feature type="binding site" evidence="1">
    <location>
        <position position="306"/>
    </location>
    <ligand>
        <name>GTP</name>
        <dbReference type="ChEBI" id="CHEBI:37565"/>
    </ligand>
</feature>
<feature type="binding site" evidence="1">
    <location>
        <begin position="332"/>
        <end position="334"/>
    </location>
    <ligand>
        <name>GTP</name>
        <dbReference type="ChEBI" id="CHEBI:37565"/>
    </ligand>
</feature>
<feature type="binding site" evidence="1">
    <location>
        <begin position="414"/>
        <end position="416"/>
    </location>
    <ligand>
        <name>GTP</name>
        <dbReference type="ChEBI" id="CHEBI:37565"/>
    </ligand>
</feature>
<proteinExistence type="inferred from homology"/>
<sequence length="429" mass="46356">MNQNVVIIGTQWGDEGKGKIVDWLTERCQAVVRFQGGHNAGHTLVIGARKTILHLIPSGILRADVSCFIGNGVVLDPLALFSELDELRPVVPDAQERLFISDACPLILPYHKSLDRAREQAMGAAKIGTTGRGIGPAYEDKVRRRALRVADLFHRERFAAKLAEALDYHNFVLQHYFKREPENFHAILEQYLELADGLAPMVVDVSVRLARLQAEGARILFEGAQGTLLDVDHGTYPFVTSSNTVAGGASAGSGVGPADLGYVLGITKAYTTRVGAGPFPTELFDETGVFLAERGAEVGATTGRARRCGWFDAVALRAACRVNGVTGLCITKLDVLDGLAEIRVAVGYRVNGVVQEELPGGAEALAACEPIYESFPGWSESTAGVRHWADLPQAARCYLEAIAERAERPLAIISTGPDRDDTILRTEIL</sequence>